<gene>
    <name evidence="1" type="primary">TK</name>
</gene>
<protein>
    <recommendedName>
        <fullName evidence="1">Thymidine kinase</fullName>
        <ecNumber evidence="1">2.7.1.21</ecNumber>
    </recommendedName>
</protein>
<proteinExistence type="inferred from homology"/>
<sequence length="359" mass="36903">MAEPARALRVVRIYLDGAHGLGKTTTGRALAAASTAGEGVLFFPEPMAYWRTMFVTDALSGILAASARCAAASHGSARGAGGPAHRADADAAGLVAYYQARFAAPYLILHARVSALLAPPGPAPGGTVTLVFDRHPVAACLCYPFARYCLREINAEDLLMLAAAMPPEAPGANLVVCTLPPAEQQRRLAARARPGDRADAGFLVAVRNAYALLVNTCAFLRAGGAWRDGWDALEWADANALAALADPSCDECKMAPAPALRDTLFAALKCRELYPGGGAGLPAVHAWALDALAGRLAALEVFVLDVSAAPDACAAAVLDMRPAMQAACADGAAGATLATLARQFALEMAGEATAGPRGL</sequence>
<organismHost>
    <name type="scientific">Bos taurus</name>
    <name type="common">Bovine</name>
    <dbReference type="NCBI Taxonomy" id="9913"/>
</organismHost>
<reference key="1">
    <citation type="journal article" date="1990" name="J. Gen. Virol.">
        <title>The location and nucleotide sequence of the thymidine kinase gene of bovine herpesvirus type 1.2.</title>
        <authorList>
            <person name="Smith G.A."/>
            <person name="Young P.L."/>
            <person name="Mattick J.S."/>
        </authorList>
    </citation>
    <scope>NUCLEOTIDE SEQUENCE</scope>
</reference>
<name>KITH_BHV1Q</name>
<accession>P24424</accession>
<feature type="chain" id="PRO_0000175062" description="Thymidine kinase">
    <location>
        <begin position="1"/>
        <end position="359"/>
    </location>
</feature>
<feature type="active site" description="Proton acceptor" evidence="1">
    <location>
        <position position="45"/>
    </location>
</feature>
<feature type="binding site" evidence="1">
    <location>
        <begin position="17"/>
        <end position="24"/>
    </location>
    <ligand>
        <name>ATP</name>
        <dbReference type="ChEBI" id="CHEBI:30616"/>
    </ligand>
</feature>
<feature type="binding site" evidence="1">
    <location>
        <position position="99"/>
    </location>
    <ligand>
        <name>substrate</name>
    </ligand>
</feature>
<feature type="binding site" evidence="1">
    <location>
        <position position="187"/>
    </location>
    <ligand>
        <name>ATP</name>
        <dbReference type="ChEBI" id="CHEBI:30616"/>
    </ligand>
</feature>
<feature type="binding site" evidence="1">
    <location>
        <position position="193"/>
    </location>
    <ligand>
        <name>substrate</name>
    </ligand>
</feature>
<organism>
    <name type="scientific">Bovine herpesvirus 1.2 (strain Q3932)</name>
    <name type="common">BoHV-1</name>
    <name type="synonym">Infectious bovine rhinotracheitis virus</name>
    <dbReference type="NCBI Taxonomy" id="10321"/>
    <lineage>
        <taxon>Viruses</taxon>
        <taxon>Duplodnaviria</taxon>
        <taxon>Heunggongvirae</taxon>
        <taxon>Peploviricota</taxon>
        <taxon>Herviviricetes</taxon>
        <taxon>Herpesvirales</taxon>
        <taxon>Orthoherpesviridae</taxon>
        <taxon>Alphaherpesvirinae</taxon>
        <taxon>Varicellovirus</taxon>
        <taxon>Varicellovirus bovinealpha1</taxon>
    </lineage>
</organism>
<dbReference type="EC" id="2.7.1.21" evidence="1"/>
<dbReference type="PIR" id="A36254">
    <property type="entry name" value="KIBEBT"/>
</dbReference>
<dbReference type="SMR" id="P24424"/>
<dbReference type="GO" id="GO:0005524">
    <property type="term" value="F:ATP binding"/>
    <property type="evidence" value="ECO:0007669"/>
    <property type="project" value="UniProtKB-KW"/>
</dbReference>
<dbReference type="GO" id="GO:0004797">
    <property type="term" value="F:thymidine kinase activity"/>
    <property type="evidence" value="ECO:0007669"/>
    <property type="project" value="UniProtKB-EC"/>
</dbReference>
<dbReference type="GO" id="GO:0071897">
    <property type="term" value="P:DNA biosynthetic process"/>
    <property type="evidence" value="ECO:0007669"/>
    <property type="project" value="UniProtKB-KW"/>
</dbReference>
<dbReference type="GO" id="GO:0006230">
    <property type="term" value="P:TMP biosynthetic process"/>
    <property type="evidence" value="ECO:0007669"/>
    <property type="project" value="InterPro"/>
</dbReference>
<dbReference type="Gene3D" id="3.40.50.300">
    <property type="entry name" value="P-loop containing nucleotide triphosphate hydrolases"/>
    <property type="match status" value="1"/>
</dbReference>
<dbReference type="HAMAP" id="MF_04029">
    <property type="entry name" value="HSV_KITH"/>
    <property type="match status" value="1"/>
</dbReference>
<dbReference type="InterPro" id="IPR001889">
    <property type="entry name" value="Herpes_TK"/>
</dbReference>
<dbReference type="InterPro" id="IPR027417">
    <property type="entry name" value="P-loop_NTPase"/>
</dbReference>
<dbReference type="Pfam" id="PF00693">
    <property type="entry name" value="Herpes_TK"/>
    <property type="match status" value="1"/>
</dbReference>
<dbReference type="SUPFAM" id="SSF52540">
    <property type="entry name" value="P-loop containing nucleoside triphosphate hydrolases"/>
    <property type="match status" value="1"/>
</dbReference>
<keyword id="KW-0067">ATP-binding</keyword>
<keyword id="KW-0237">DNA synthesis</keyword>
<keyword id="KW-0244">Early protein</keyword>
<keyword id="KW-0418">Kinase</keyword>
<keyword id="KW-0547">Nucleotide-binding</keyword>
<keyword id="KW-0808">Transferase</keyword>
<comment type="function">
    <text evidence="1">Catalyzes the transfer of the gamma-phospho group of ATP to thymidine to generate dTMP in the salvage pathway of pyrimidine synthesis. The dTMP serves as a substrate for DNA polymerase during viral DNA replication. Allows the virus to be reactivated and to grow in non-proliferative cells lacking a high concentration of phosphorylated nucleic acid precursors.</text>
</comment>
<comment type="catalytic activity">
    <reaction evidence="1">
        <text>thymidine + ATP = dTMP + ADP + H(+)</text>
        <dbReference type="Rhea" id="RHEA:19129"/>
        <dbReference type="ChEBI" id="CHEBI:15378"/>
        <dbReference type="ChEBI" id="CHEBI:17748"/>
        <dbReference type="ChEBI" id="CHEBI:30616"/>
        <dbReference type="ChEBI" id="CHEBI:63528"/>
        <dbReference type="ChEBI" id="CHEBI:456216"/>
        <dbReference type="EC" id="2.7.1.21"/>
    </reaction>
</comment>
<comment type="subunit">
    <text evidence="1">Homodimer.</text>
</comment>
<comment type="similarity">
    <text evidence="1">Belongs to the herpesviridae thymidine kinase family.</text>
</comment>
<evidence type="ECO:0000255" key="1">
    <source>
        <dbReference type="HAMAP-Rule" id="MF_04029"/>
    </source>
</evidence>